<name>CD3D_SHEEP</name>
<gene>
    <name type="primary">CD3D</name>
</gene>
<organism>
    <name type="scientific">Ovis aries</name>
    <name type="common">Sheep</name>
    <dbReference type="NCBI Taxonomy" id="9940"/>
    <lineage>
        <taxon>Eukaryota</taxon>
        <taxon>Metazoa</taxon>
        <taxon>Chordata</taxon>
        <taxon>Craniata</taxon>
        <taxon>Vertebrata</taxon>
        <taxon>Euteleostomi</taxon>
        <taxon>Mammalia</taxon>
        <taxon>Eutheria</taxon>
        <taxon>Laurasiatheria</taxon>
        <taxon>Artiodactyla</taxon>
        <taxon>Ruminantia</taxon>
        <taxon>Pecora</taxon>
        <taxon>Bovidae</taxon>
        <taxon>Caprinae</taxon>
        <taxon>Ovis</taxon>
    </lineage>
</organism>
<keyword id="KW-0002">3D-structure</keyword>
<keyword id="KW-1064">Adaptive immunity</keyword>
<keyword id="KW-1003">Cell membrane</keyword>
<keyword id="KW-1015">Disulfide bond</keyword>
<keyword id="KW-0325">Glycoprotein</keyword>
<keyword id="KW-0391">Immunity</keyword>
<keyword id="KW-0472">Membrane</keyword>
<keyword id="KW-0597">Phosphoprotein</keyword>
<keyword id="KW-0675">Receptor</keyword>
<keyword id="KW-1185">Reference proteome</keyword>
<keyword id="KW-0732">Signal</keyword>
<keyword id="KW-0812">Transmembrane</keyword>
<keyword id="KW-1133">Transmembrane helix</keyword>
<sequence length="167" mass="18562">MEHSRCLSCLILAALLSQVNPRALEVLEAEDKVILKCNSSITLLQGTAGQEVSDNKTLNLGKRIEDPRGMYQCGENAKSFTLQVYYRMCQNCVELDSATLAGLIITDIIATVLLALGVYCFAGHETGRFSRAADTQVLMGNDQLYQPLRERNDAQYSRLGDKWARNK</sequence>
<reference key="1">
    <citation type="journal article" date="1990" name="Eur. J. Immunol.">
        <title>Characterization of the CD3 gamma and delta invariant subunits of the sheep T cell antigen receptor.</title>
        <authorList>
            <person name="Hein W.R."/>
            <person name="Tunnacliffe A."/>
        </authorList>
    </citation>
    <scope>NUCLEOTIDE SEQUENCE [MRNA]</scope>
    <source>
        <tissue>Lymphocyte</tissue>
    </source>
</reference>
<protein>
    <recommendedName>
        <fullName>T-cell surface glycoprotein CD3 delta chain</fullName>
    </recommendedName>
    <alternativeName>
        <fullName>T-cell receptor T3 delta chain</fullName>
    </alternativeName>
    <cdAntigenName>CD3d</cdAntigenName>
</protein>
<dbReference type="EMBL" id="X52993">
    <property type="protein sequence ID" value="CAA37182.1"/>
    <property type="molecule type" value="mRNA"/>
</dbReference>
<dbReference type="PIR" id="B43547">
    <property type="entry name" value="RWSHD3"/>
</dbReference>
<dbReference type="RefSeq" id="NP_001009382.1">
    <property type="nucleotide sequence ID" value="NM_001009382.1"/>
</dbReference>
<dbReference type="PDB" id="1XMW">
    <property type="method" value="NMR"/>
    <property type="chains" value="A=22-88"/>
</dbReference>
<dbReference type="PDBsum" id="1XMW"/>
<dbReference type="SMR" id="P18438"/>
<dbReference type="STRING" id="9940.ENSOARP00000009839"/>
<dbReference type="GlyCosmos" id="P18438">
    <property type="glycosylation" value="2 sites, No reported glycans"/>
</dbReference>
<dbReference type="PaxDb" id="9940-ENSOARP00000009839"/>
<dbReference type="Ensembl" id="ENSOART00180023327">
    <property type="protein sequence ID" value="ENSOARP00180011971"/>
    <property type="gene ID" value="ENSOARG00180014184"/>
</dbReference>
<dbReference type="Ensembl" id="ENSOART00185026461">
    <property type="protein sequence ID" value="ENSOARP00185012099"/>
    <property type="gene ID" value="ENSOARG00185016421"/>
</dbReference>
<dbReference type="Ensembl" id="ENSOART00220068841">
    <property type="protein sequence ID" value="ENSOARP00220037220"/>
    <property type="gene ID" value="ENSOARG00220041269"/>
</dbReference>
<dbReference type="GeneID" id="443397"/>
<dbReference type="KEGG" id="oas:443397"/>
<dbReference type="CTD" id="915"/>
<dbReference type="eggNOG" id="ENOG502S4XC">
    <property type="taxonomic scope" value="Eukaryota"/>
</dbReference>
<dbReference type="OrthoDB" id="8941324at2759"/>
<dbReference type="EvolutionaryTrace" id="P18438"/>
<dbReference type="Proteomes" id="UP000002356">
    <property type="component" value="Unplaced"/>
</dbReference>
<dbReference type="GO" id="GO:0042105">
    <property type="term" value="C:alpha-beta T cell receptor complex"/>
    <property type="evidence" value="ECO:0007669"/>
    <property type="project" value="TreeGrafter"/>
</dbReference>
<dbReference type="GO" id="GO:0009897">
    <property type="term" value="C:external side of plasma membrane"/>
    <property type="evidence" value="ECO:0007669"/>
    <property type="project" value="TreeGrafter"/>
</dbReference>
<dbReference type="GO" id="GO:0004888">
    <property type="term" value="F:transmembrane signaling receptor activity"/>
    <property type="evidence" value="ECO:0007669"/>
    <property type="project" value="InterPro"/>
</dbReference>
<dbReference type="GO" id="GO:0002250">
    <property type="term" value="P:adaptive immune response"/>
    <property type="evidence" value="ECO:0007669"/>
    <property type="project" value="UniProtKB-KW"/>
</dbReference>
<dbReference type="GO" id="GO:0007166">
    <property type="term" value="P:cell surface receptor signaling pathway"/>
    <property type="evidence" value="ECO:0007669"/>
    <property type="project" value="InterPro"/>
</dbReference>
<dbReference type="GO" id="GO:0045059">
    <property type="term" value="P:positive thymic T cell selection"/>
    <property type="evidence" value="ECO:0000250"/>
    <property type="project" value="UniProtKB"/>
</dbReference>
<dbReference type="CDD" id="cd07691">
    <property type="entry name" value="IgC1_CD3_gamma_delta"/>
    <property type="match status" value="1"/>
</dbReference>
<dbReference type="FunFam" id="1.10.287.770:FF:000026">
    <property type="entry name" value="T-cell surface glycoprotein CD3 delta chain"/>
    <property type="match status" value="1"/>
</dbReference>
<dbReference type="FunFam" id="2.60.40.10:FF:001361">
    <property type="entry name" value="T-cell surface glycoprotein CD3 delta chain"/>
    <property type="match status" value="1"/>
</dbReference>
<dbReference type="Gene3D" id="2.60.40.10">
    <property type="entry name" value="Immunoglobulins"/>
    <property type="match status" value="1"/>
</dbReference>
<dbReference type="Gene3D" id="1.10.287.770">
    <property type="entry name" value="YojJ-like"/>
    <property type="match status" value="1"/>
</dbReference>
<dbReference type="InterPro" id="IPR015484">
    <property type="entry name" value="CD3_esu/gsu/dsu"/>
</dbReference>
<dbReference type="InterPro" id="IPR036179">
    <property type="entry name" value="Ig-like_dom_sf"/>
</dbReference>
<dbReference type="InterPro" id="IPR013783">
    <property type="entry name" value="Ig-like_fold"/>
</dbReference>
<dbReference type="InterPro" id="IPR032052">
    <property type="entry name" value="Ig_4"/>
</dbReference>
<dbReference type="InterPro" id="IPR003110">
    <property type="entry name" value="Phos_immunorcpt_sig_ITAM"/>
</dbReference>
<dbReference type="PANTHER" id="PTHR10570:SF5">
    <property type="entry name" value="T-CELL SURFACE GLYCOPROTEIN CD3 DELTA CHAIN"/>
    <property type="match status" value="1"/>
</dbReference>
<dbReference type="PANTHER" id="PTHR10570">
    <property type="entry name" value="T-CELL SURFACE GLYCOPROTEIN CD3 GAMMA CHAIN / DELTA CHAIN"/>
    <property type="match status" value="1"/>
</dbReference>
<dbReference type="Pfam" id="PF16680">
    <property type="entry name" value="Ig_4"/>
    <property type="match status" value="1"/>
</dbReference>
<dbReference type="Pfam" id="PF02189">
    <property type="entry name" value="ITAM"/>
    <property type="match status" value="1"/>
</dbReference>
<dbReference type="SMART" id="SM00077">
    <property type="entry name" value="ITAM"/>
    <property type="match status" value="1"/>
</dbReference>
<dbReference type="SUPFAM" id="SSF48726">
    <property type="entry name" value="Immunoglobulin"/>
    <property type="match status" value="1"/>
</dbReference>
<dbReference type="PROSITE" id="PS51055">
    <property type="entry name" value="ITAM_1"/>
    <property type="match status" value="1"/>
</dbReference>
<accession>P18438</accession>
<evidence type="ECO:0000250" key="1"/>
<evidence type="ECO:0000250" key="2">
    <source>
        <dbReference type="UniProtKB" id="P04234"/>
    </source>
</evidence>
<evidence type="ECO:0000255" key="3"/>
<evidence type="ECO:0000255" key="4">
    <source>
        <dbReference type="PROSITE-ProRule" id="PRU00379"/>
    </source>
</evidence>
<evidence type="ECO:0007829" key="5">
    <source>
        <dbReference type="PDB" id="1XMW"/>
    </source>
</evidence>
<proteinExistence type="evidence at protein level"/>
<comment type="function">
    <text evidence="2">Part of the TCR-CD3 complex present on T-lymphocyte cell surface that plays an essential role in adaptive immune response. When antigen presenting cells (APCs) activate T-cell receptor (TCR), TCR-mediated signals are transmitted across the cell membrane by the CD3 chains CD3D, CD3E, CD3G and CD3Z. All CD3 chains contain immunoreceptor tyrosine-based activation motifs (ITAMs) in their cytoplasmic domain. Upon TCR engagement, these motifs become phosphorylated by Src family protein tyrosine kinases LCK and FYN, resulting in the activation of downstream signaling pathways. In addition of this role of signal transduction in T-cell activation, CD3D plays an essential role in thymocyte differentiation. Indeed, participates in correct intracellular TCR-CD3 complex assembly and surface expression. In absence of a functional TCR-CD3 complex, thymocytes are unable to differentiate properly. Interacts with CD4 and CD8 and thus serves to establish a functional link between the TCR and coreceptors CD4 and CD8, which is needed for activation and positive selection of CD4 or CD8 T-cells.</text>
</comment>
<comment type="subunit">
    <text evidence="2">The TCR-CD3 complex is composed of a CD3D/CD3E and a CD3G/CD3E heterodimers that preferentially associate with TCRalpha and TCRbeta, respectively, to form TCRalpha/CD3E/CD3G and TCRbeta/CD3G/CD3E trimers. In turn, the hexamer interacts with CD3Z homodimer to form the TCR-CD3 complex. Alternatively, TCRalpha and TCRbeta can be replaced by TCRgamma and TCRdelta. Interacts with coreceptors CD4 and CD8.</text>
</comment>
<comment type="subcellular location">
    <subcellularLocation>
        <location evidence="2">Cell membrane</location>
        <topology evidence="2">Single-pass type I membrane protein</topology>
    </subcellularLocation>
</comment>
<comment type="tissue specificity">
    <text evidence="2">CD3D is mostly present on T-lymphocytes with its TCR-CD3 partners. Present also in fetal NK-cells.</text>
</comment>
<comment type="PTM">
    <text evidence="2">Phosphorylated on Tyr residues after T-cell receptor triggering by LCK in association with CD4/CD8.</text>
</comment>
<feature type="signal peptide">
    <location>
        <begin position="1"/>
        <end position="21"/>
    </location>
</feature>
<feature type="chain" id="PRO_0000016492" description="T-cell surface glycoprotein CD3 delta chain">
    <location>
        <begin position="22"/>
        <end position="167"/>
    </location>
</feature>
<feature type="topological domain" description="Extracellular" evidence="3">
    <location>
        <begin position="22"/>
        <end position="100"/>
    </location>
</feature>
<feature type="transmembrane region" description="Helical" evidence="3">
    <location>
        <begin position="101"/>
        <end position="121"/>
    </location>
</feature>
<feature type="topological domain" description="Cytoplasmic" evidence="3">
    <location>
        <begin position="122"/>
        <end position="167"/>
    </location>
</feature>
<feature type="domain" description="ITAM" evidence="4">
    <location>
        <begin position="134"/>
        <end position="162"/>
    </location>
</feature>
<feature type="modified residue" description="Phosphotyrosine" evidence="2 4">
    <location>
        <position position="145"/>
    </location>
</feature>
<feature type="modified residue" description="Phosphotyrosine" evidence="2 4">
    <location>
        <position position="156"/>
    </location>
</feature>
<feature type="glycosylation site" description="N-linked (GlcNAc...) asparagine" evidence="3">
    <location>
        <position position="38"/>
    </location>
</feature>
<feature type="glycosylation site" description="N-linked (GlcNAc...) asparagine" evidence="3">
    <location>
        <position position="55"/>
    </location>
</feature>
<feature type="disulfide bond" evidence="1">
    <location>
        <begin position="37"/>
        <end position="73"/>
    </location>
</feature>
<feature type="strand" evidence="5">
    <location>
        <begin position="22"/>
        <end position="29"/>
    </location>
</feature>
<feature type="strand" evidence="5">
    <location>
        <begin position="32"/>
        <end position="36"/>
    </location>
</feature>
<feature type="strand" evidence="5">
    <location>
        <begin position="38"/>
        <end position="40"/>
    </location>
</feature>
<feature type="strand" evidence="5">
    <location>
        <begin position="42"/>
        <end position="46"/>
    </location>
</feature>
<feature type="strand" evidence="5">
    <location>
        <begin position="51"/>
        <end position="58"/>
    </location>
</feature>
<feature type="strand" evidence="5">
    <location>
        <begin position="68"/>
        <end position="72"/>
    </location>
</feature>
<feature type="strand" evidence="5">
    <location>
        <begin position="75"/>
        <end position="77"/>
    </location>
</feature>
<feature type="strand" evidence="5">
    <location>
        <begin position="81"/>
        <end position="86"/>
    </location>
</feature>